<organism>
    <name type="scientific">Thermus thermophilus (strain ATCC 27634 / DSM 579 / HB8)</name>
    <dbReference type="NCBI Taxonomy" id="300852"/>
    <lineage>
        <taxon>Bacteria</taxon>
        <taxon>Thermotogati</taxon>
        <taxon>Deinococcota</taxon>
        <taxon>Deinococci</taxon>
        <taxon>Thermales</taxon>
        <taxon>Thermaceae</taxon>
        <taxon>Thermus</taxon>
    </lineage>
</organism>
<keyword id="KW-0002">3D-structure</keyword>
<keyword id="KW-0903">Direct protein sequencing</keyword>
<keyword id="KW-0488">Methylation</keyword>
<keyword id="KW-1185">Reference proteome</keyword>
<keyword id="KW-0687">Ribonucleoprotein</keyword>
<keyword id="KW-0689">Ribosomal protein</keyword>
<keyword id="KW-0694">RNA-binding</keyword>
<keyword id="KW-0699">rRNA-binding</keyword>
<reference key="1">
    <citation type="submission" date="2004-11" db="EMBL/GenBank/DDBJ databases">
        <title>Complete genome sequence of Thermus thermophilus HB8.</title>
        <authorList>
            <person name="Masui R."/>
            <person name="Kurokawa K."/>
            <person name="Nakagawa N."/>
            <person name="Tokunaga F."/>
            <person name="Koyama Y."/>
            <person name="Shibata T."/>
            <person name="Oshima T."/>
            <person name="Yokoyama S."/>
            <person name="Yasunaga T."/>
            <person name="Kuramitsu S."/>
        </authorList>
    </citation>
    <scope>NUCLEOTIDE SEQUENCE [LARGE SCALE GENOMIC DNA]</scope>
    <source>
        <strain>ATCC 27634 / DSM 579 / HB8</strain>
    </source>
</reference>
<reference key="2">
    <citation type="journal article" date="2000" name="Biol. Chem.">
        <title>Identification of the 50S ribosomal proteins from the eubacterium Thermus thermophilus.</title>
        <authorList>
            <person name="Katsani K.R."/>
            <person name="Tsiboli P."/>
            <person name="Anagnostopoulos K."/>
            <person name="Urlaub H."/>
            <person name="Choli-Papadopoulou T."/>
        </authorList>
    </citation>
    <scope>PROTEIN SEQUENCE OF 1-21</scope>
    <source>
        <strain>ATCC 27634 / DSM 579 / HB8</strain>
    </source>
</reference>
<reference key="3">
    <citation type="journal article" date="2005" name="Proteomics">
        <title>Extending ribosomal protein identifications to unsequenced bacterial strains using matrix-assisted laser desorption/ionization mass spectrometry.</title>
        <authorList>
            <person name="Suh M.-J."/>
            <person name="Hamburg D.M."/>
            <person name="Gregory S.T."/>
            <person name="Dahlberg A.E."/>
            <person name="Limbach P.A."/>
        </authorList>
    </citation>
    <scope>MASS SPECTROMETRY</scope>
    <source>
        <strain>ATCC 27634 / DSM 579 / HB8</strain>
    </source>
</reference>
<reference key="4">
    <citation type="journal article" date="2001" name="Cell">
        <title>The path of messenger RNA through the ribosome.</title>
        <authorList>
            <person name="Yusupova G.Z."/>
            <person name="Yusupov M.M."/>
            <person name="Cate J.H.D."/>
            <person name="Noller H.F."/>
        </authorList>
    </citation>
    <scope>X-RAY CRYSTALLOGRAPHY (5.0 ANGSTROMS) OF THE RIBOSOME</scope>
</reference>
<reference key="5">
    <citation type="journal article" date="2001" name="Science">
        <title>Crystal structure of the ribosome at 5.5 A resolution.</title>
        <authorList>
            <person name="Yusupov M.M."/>
            <person name="Yusupova G.Z."/>
            <person name="Baucom A."/>
            <person name="Lieberman K."/>
            <person name="Earnest T.N."/>
            <person name="Cate J.H.D."/>
            <person name="Noller H.F."/>
        </authorList>
    </citation>
    <scope>X-RAY CRYSTALLOGRAPHY (5.5 ANGSTROMS) OF THE RIBOSOME</scope>
</reference>
<reference key="6">
    <citation type="journal article" date="2008" name="Science">
        <title>Insights into translational termination from the structure of RF2 bound to the ribosome.</title>
        <authorList>
            <person name="Weixlbaumer A."/>
            <person name="Jin H."/>
            <person name="Neubauer C."/>
            <person name="Voorhees R.M."/>
            <person name="Petry S."/>
            <person name="Kelley A.C."/>
            <person name="Ramakrishnan V."/>
        </authorList>
    </citation>
    <scope>X-RAY CRYSTALLOGRAPHY (3.45 ANGSTROMS) OF 70S RIBOSOME IN COMPLEX WITH RF2</scope>
    <scope>SUBUNIT</scope>
</reference>
<reference key="7">
    <citation type="journal article" date="2010" name="Proc. Natl. Acad. Sci. U.S.A.">
        <title>Structure of the 70S ribosome bound to release factor 2 and a substrate analog provides insights into catalysis of peptide release.</title>
        <authorList>
            <person name="Jin H."/>
            <person name="Kelley A.C."/>
            <person name="Loakes D."/>
            <person name="Ramakrishnan V."/>
        </authorList>
    </citation>
    <scope>X-RAY CRYSTALLOGRAPHY (3.10 ANGSTROMS) OF 70S RIBOSOME IN COMPLEX WITH RF2</scope>
    <scope>SUBUNIT</scope>
</reference>
<protein>
    <recommendedName>
        <fullName evidence="3">Large ribosomal subunit protein uL3</fullName>
    </recommendedName>
    <alternativeName>
        <fullName>50S ribosomal protein L3</fullName>
    </alternativeName>
</protein>
<sequence length="206" mass="22408">MKGILGVKVGMTRIFRDDRAVPVTVILAGPCPVVQRRTPEKDGYTAVQLGFLPQNPKRVNRPLKGHFAKAGVEPVRILREIRDFNPEGDTVTVEIFKPGERVDVTGTSKGRGFAGVMKRWNFAGGPDSHGAHKIHRHPGSIGNRKTPGRVYKGKKMAGHYGAERVTVMNLEVVDVIPEENLLLVKGAVPGPNGGLVIVRETKKAAK</sequence>
<feature type="chain" id="PRO_0000077180" description="Large ribosomal subunit protein uL3">
    <location>
        <begin position="1"/>
        <end position="206"/>
    </location>
</feature>
<feature type="strand" evidence="4">
    <location>
        <begin position="3"/>
        <end position="16"/>
    </location>
</feature>
<feature type="strand" evidence="4">
    <location>
        <begin position="19"/>
        <end position="27"/>
    </location>
</feature>
<feature type="strand" evidence="4">
    <location>
        <begin position="35"/>
        <end position="37"/>
    </location>
</feature>
<feature type="turn" evidence="4">
    <location>
        <begin position="39"/>
        <end position="42"/>
    </location>
</feature>
<feature type="strand" evidence="4">
    <location>
        <begin position="46"/>
        <end position="48"/>
    </location>
</feature>
<feature type="helix" evidence="4">
    <location>
        <begin position="61"/>
        <end position="63"/>
    </location>
</feature>
<feature type="strand" evidence="4">
    <location>
        <begin position="87"/>
        <end position="89"/>
    </location>
</feature>
<feature type="helix" evidence="4">
    <location>
        <begin position="93"/>
        <end position="95"/>
    </location>
</feature>
<feature type="strand" evidence="4">
    <location>
        <begin position="101"/>
        <end position="107"/>
    </location>
</feature>
<feature type="strand" evidence="4">
    <location>
        <begin position="110"/>
        <end position="114"/>
    </location>
</feature>
<feature type="turn" evidence="4">
    <location>
        <begin position="116"/>
        <end position="118"/>
    </location>
</feature>
<feature type="strand" evidence="4">
    <location>
        <begin position="127"/>
        <end position="130"/>
    </location>
</feature>
<feature type="strand" evidence="4">
    <location>
        <begin position="144"/>
        <end position="147"/>
    </location>
</feature>
<feature type="strand" evidence="4">
    <location>
        <begin position="158"/>
        <end position="162"/>
    </location>
</feature>
<feature type="strand" evidence="4">
    <location>
        <begin position="164"/>
        <end position="174"/>
    </location>
</feature>
<feature type="turn" evidence="4">
    <location>
        <begin position="177"/>
        <end position="180"/>
    </location>
</feature>
<feature type="strand" evidence="4">
    <location>
        <begin position="181"/>
        <end position="186"/>
    </location>
</feature>
<feature type="strand" evidence="4">
    <location>
        <begin position="195"/>
        <end position="200"/>
    </location>
</feature>
<proteinExistence type="evidence at protein level"/>
<evidence type="ECO:0000250" key="1"/>
<evidence type="ECO:0000269" key="2">
    <source>
    </source>
</evidence>
<evidence type="ECO:0000305" key="3"/>
<evidence type="ECO:0007829" key="4">
    <source>
        <dbReference type="PDB" id="4WT8"/>
    </source>
</evidence>
<gene>
    <name type="primary">rplC</name>
    <name type="ordered locus">TTHA1692</name>
</gene>
<name>RL3_THET8</name>
<dbReference type="EMBL" id="AP008226">
    <property type="protein sequence ID" value="BAD71515.1"/>
    <property type="molecule type" value="Genomic_DNA"/>
</dbReference>
<dbReference type="RefSeq" id="WP_011173714.1">
    <property type="nucleotide sequence ID" value="NC_006461.1"/>
</dbReference>
<dbReference type="RefSeq" id="YP_144958.1">
    <property type="nucleotide sequence ID" value="NC_006461.1"/>
</dbReference>
<dbReference type="PDB" id="1VVJ">
    <property type="method" value="X-ray"/>
    <property type="resolution" value="3.44 A"/>
    <property type="chains" value="RE/YE=1-206"/>
</dbReference>
<dbReference type="PDB" id="1VY4">
    <property type="method" value="X-ray"/>
    <property type="resolution" value="2.60 A"/>
    <property type="chains" value="BE/DE=1-206"/>
</dbReference>
<dbReference type="PDB" id="1VY5">
    <property type="method" value="X-ray"/>
    <property type="resolution" value="2.55 A"/>
    <property type="chains" value="BE/DE=1-206"/>
</dbReference>
<dbReference type="PDB" id="1VY6">
    <property type="method" value="X-ray"/>
    <property type="resolution" value="2.90 A"/>
    <property type="chains" value="BE/DE=1-206"/>
</dbReference>
<dbReference type="PDB" id="1VY7">
    <property type="method" value="X-ray"/>
    <property type="resolution" value="2.80 A"/>
    <property type="chains" value="BE/DE=1-206"/>
</dbReference>
<dbReference type="PDB" id="4L47">
    <property type="method" value="X-ray"/>
    <property type="resolution" value="3.22 A"/>
    <property type="chains" value="RE/YE=1-206"/>
</dbReference>
<dbReference type="PDB" id="4L71">
    <property type="method" value="X-ray"/>
    <property type="resolution" value="3.90 A"/>
    <property type="chains" value="RE/YE=1-206"/>
</dbReference>
<dbReference type="PDB" id="4LEL">
    <property type="method" value="X-ray"/>
    <property type="resolution" value="3.90 A"/>
    <property type="chains" value="RE/YE=1-206"/>
</dbReference>
<dbReference type="PDB" id="4LFZ">
    <property type="method" value="X-ray"/>
    <property type="resolution" value="3.92 A"/>
    <property type="chains" value="RE/YE=1-206"/>
</dbReference>
<dbReference type="PDB" id="4LNT">
    <property type="method" value="X-ray"/>
    <property type="resolution" value="2.94 A"/>
    <property type="chains" value="RE/YE=1-206"/>
</dbReference>
<dbReference type="PDB" id="4LSK">
    <property type="method" value="X-ray"/>
    <property type="resolution" value="3.48 A"/>
    <property type="chains" value="RE/YE=1-206"/>
</dbReference>
<dbReference type="PDB" id="4LT8">
    <property type="method" value="X-ray"/>
    <property type="resolution" value="3.14 A"/>
    <property type="chains" value="RE/YE=1-206"/>
</dbReference>
<dbReference type="PDB" id="4P6F">
    <property type="method" value="X-ray"/>
    <property type="resolution" value="3.60 A"/>
    <property type="chains" value="RE/YE=1-206"/>
</dbReference>
<dbReference type="PDB" id="4P70">
    <property type="method" value="X-ray"/>
    <property type="resolution" value="3.68 A"/>
    <property type="chains" value="RE/YE=1-206"/>
</dbReference>
<dbReference type="PDB" id="4TUA">
    <property type="method" value="X-ray"/>
    <property type="resolution" value="3.60 A"/>
    <property type="chains" value="RE/YE=1-206"/>
</dbReference>
<dbReference type="PDB" id="4TUB">
    <property type="method" value="X-ray"/>
    <property type="resolution" value="3.60 A"/>
    <property type="chains" value="RE/YE=1-206"/>
</dbReference>
<dbReference type="PDB" id="4TUC">
    <property type="method" value="X-ray"/>
    <property type="resolution" value="3.60 A"/>
    <property type="chains" value="RE/YE=1-206"/>
</dbReference>
<dbReference type="PDB" id="4TUD">
    <property type="method" value="X-ray"/>
    <property type="resolution" value="3.60 A"/>
    <property type="chains" value="RE/YE=1-206"/>
</dbReference>
<dbReference type="PDB" id="4TUE">
    <property type="method" value="X-ray"/>
    <property type="resolution" value="3.50 A"/>
    <property type="chains" value="RE/YE=1-206"/>
</dbReference>
<dbReference type="PDB" id="4V42">
    <property type="method" value="X-ray"/>
    <property type="resolution" value="5.50 A"/>
    <property type="chains" value="BE=21-26"/>
</dbReference>
<dbReference type="PDB" id="4V4P">
    <property type="method" value="X-ray"/>
    <property type="resolution" value="5.50 A"/>
    <property type="chains" value="E=21-26"/>
</dbReference>
<dbReference type="PDB" id="4V4X">
    <property type="method" value="X-ray"/>
    <property type="resolution" value="5.00 A"/>
    <property type="chains" value="E=1-206"/>
</dbReference>
<dbReference type="PDB" id="4V4Y">
    <property type="method" value="X-ray"/>
    <property type="resolution" value="5.50 A"/>
    <property type="chains" value="E=1-206"/>
</dbReference>
<dbReference type="PDB" id="4V4Z">
    <property type="method" value="X-ray"/>
    <property type="resolution" value="4.51 A"/>
    <property type="chains" value="E=1-206"/>
</dbReference>
<dbReference type="PDB" id="4V51">
    <property type="method" value="X-ray"/>
    <property type="resolution" value="2.80 A"/>
    <property type="chains" value="BE/DE=1-206"/>
</dbReference>
<dbReference type="PDB" id="4V5A">
    <property type="method" value="X-ray"/>
    <property type="resolution" value="3.50 A"/>
    <property type="chains" value="BE/DE=1-206"/>
</dbReference>
<dbReference type="PDB" id="4V5C">
    <property type="method" value="X-ray"/>
    <property type="resolution" value="3.30 A"/>
    <property type="chains" value="BE/DE=1-206"/>
</dbReference>
<dbReference type="PDB" id="4V5D">
    <property type="method" value="X-ray"/>
    <property type="resolution" value="3.50 A"/>
    <property type="chains" value="BE/DE=1-206"/>
</dbReference>
<dbReference type="PDB" id="4V5E">
    <property type="method" value="X-ray"/>
    <property type="resolution" value="3.45 A"/>
    <property type="chains" value="BE/DE=1-206"/>
</dbReference>
<dbReference type="PDB" id="4V5F">
    <property type="method" value="X-ray"/>
    <property type="resolution" value="3.60 A"/>
    <property type="chains" value="BE/DE=1-206"/>
</dbReference>
<dbReference type="PDB" id="4V5G">
    <property type="method" value="X-ray"/>
    <property type="resolution" value="3.60 A"/>
    <property type="chains" value="BE/DE=1-206"/>
</dbReference>
<dbReference type="PDB" id="4V5J">
    <property type="method" value="X-ray"/>
    <property type="resolution" value="3.10 A"/>
    <property type="chains" value="BE/DE=1-206"/>
</dbReference>
<dbReference type="PDB" id="4V5K">
    <property type="method" value="X-ray"/>
    <property type="resolution" value="3.20 A"/>
    <property type="chains" value="BE/DE=1-206"/>
</dbReference>
<dbReference type="PDB" id="4V5L">
    <property type="method" value="X-ray"/>
    <property type="resolution" value="3.10 A"/>
    <property type="chains" value="BE=1-206"/>
</dbReference>
<dbReference type="PDB" id="4V5M">
    <property type="method" value="EM"/>
    <property type="resolution" value="7.80 A"/>
    <property type="chains" value="BE=1-206"/>
</dbReference>
<dbReference type="PDB" id="4V5N">
    <property type="method" value="EM"/>
    <property type="resolution" value="7.60 A"/>
    <property type="chains" value="BE=1-206"/>
</dbReference>
<dbReference type="PDB" id="4V5P">
    <property type="method" value="X-ray"/>
    <property type="resolution" value="3.10 A"/>
    <property type="chains" value="BE/DE=1-206"/>
</dbReference>
<dbReference type="PDB" id="4V5Q">
    <property type="method" value="X-ray"/>
    <property type="resolution" value="3.10 A"/>
    <property type="chains" value="BE/DE=1-206"/>
</dbReference>
<dbReference type="PDB" id="4V5R">
    <property type="method" value="X-ray"/>
    <property type="resolution" value="3.10 A"/>
    <property type="chains" value="BE/DE=1-206"/>
</dbReference>
<dbReference type="PDB" id="4V5S">
    <property type="method" value="X-ray"/>
    <property type="resolution" value="3.10 A"/>
    <property type="chains" value="BE/DE=1-206"/>
</dbReference>
<dbReference type="PDB" id="4V68">
    <property type="method" value="EM"/>
    <property type="resolution" value="6.40 A"/>
    <property type="chains" value="BE=1-205"/>
</dbReference>
<dbReference type="PDB" id="4V6A">
    <property type="method" value="X-ray"/>
    <property type="resolution" value="3.10 A"/>
    <property type="chains" value="BE/DE=1-206"/>
</dbReference>
<dbReference type="PDB" id="4V6F">
    <property type="method" value="X-ray"/>
    <property type="resolution" value="3.10 A"/>
    <property type="chains" value="AE/DE=1-206"/>
</dbReference>
<dbReference type="PDB" id="4V6G">
    <property type="method" value="X-ray"/>
    <property type="resolution" value="3.50 A"/>
    <property type="chains" value="BE/DE=1-206"/>
</dbReference>
<dbReference type="PDB" id="4V7J">
    <property type="method" value="X-ray"/>
    <property type="resolution" value="3.30 A"/>
    <property type="chains" value="AE/BE=1-206"/>
</dbReference>
<dbReference type="PDB" id="4V7K">
    <property type="method" value="X-ray"/>
    <property type="resolution" value="3.60 A"/>
    <property type="chains" value="AE/BE=1-206"/>
</dbReference>
<dbReference type="PDB" id="4V7L">
    <property type="method" value="X-ray"/>
    <property type="resolution" value="3.00 A"/>
    <property type="chains" value="BE/DE=1-206"/>
</dbReference>
<dbReference type="PDB" id="4V7M">
    <property type="method" value="X-ray"/>
    <property type="resolution" value="3.45 A"/>
    <property type="chains" value="BE/DE=1-206"/>
</dbReference>
<dbReference type="PDB" id="4V7W">
    <property type="method" value="X-ray"/>
    <property type="resolution" value="3.00 A"/>
    <property type="chains" value="BE/DE=1-206"/>
</dbReference>
<dbReference type="PDB" id="4V7X">
    <property type="method" value="X-ray"/>
    <property type="resolution" value="3.00 A"/>
    <property type="chains" value="BE/DE=1-206"/>
</dbReference>
<dbReference type="PDB" id="4V7Y">
    <property type="method" value="X-ray"/>
    <property type="resolution" value="3.00 A"/>
    <property type="chains" value="BE/DE=1-206"/>
</dbReference>
<dbReference type="PDB" id="4V7Z">
    <property type="method" value="X-ray"/>
    <property type="resolution" value="3.10 A"/>
    <property type="chains" value="BE/DE=1-206"/>
</dbReference>
<dbReference type="PDB" id="4V87">
    <property type="method" value="X-ray"/>
    <property type="resolution" value="3.10 A"/>
    <property type="chains" value="AE/DE=1-205"/>
</dbReference>
<dbReference type="PDB" id="4V8A">
    <property type="method" value="X-ray"/>
    <property type="resolution" value="3.20 A"/>
    <property type="chains" value="AE/BE=1-206"/>
</dbReference>
<dbReference type="PDB" id="4V8B">
    <property type="method" value="X-ray"/>
    <property type="resolution" value="3.00 A"/>
    <property type="chains" value="BE/DE=1-206"/>
</dbReference>
<dbReference type="PDB" id="4V8C">
    <property type="method" value="X-ray"/>
    <property type="resolution" value="3.30 A"/>
    <property type="chains" value="AE/BE=1-206"/>
</dbReference>
<dbReference type="PDB" id="4V8D">
    <property type="method" value="X-ray"/>
    <property type="resolution" value="3.00 A"/>
    <property type="chains" value="BE/DE=1-206"/>
</dbReference>
<dbReference type="PDB" id="4V8E">
    <property type="method" value="X-ray"/>
    <property type="resolution" value="3.30 A"/>
    <property type="chains" value="AE/CE=1-206"/>
</dbReference>
<dbReference type="PDB" id="4V8F">
    <property type="method" value="X-ray"/>
    <property type="resolution" value="3.30 A"/>
    <property type="chains" value="AE/DE=1-206"/>
</dbReference>
<dbReference type="PDB" id="4V8G">
    <property type="method" value="X-ray"/>
    <property type="resolution" value="3.00 A"/>
    <property type="chains" value="BE/DE=1-206"/>
</dbReference>
<dbReference type="PDB" id="4V8H">
    <property type="method" value="X-ray"/>
    <property type="resolution" value="3.10 A"/>
    <property type="chains" value="BE/DE=1-206"/>
</dbReference>
<dbReference type="PDB" id="4V8I">
    <property type="method" value="X-ray"/>
    <property type="resolution" value="2.70 A"/>
    <property type="chains" value="BE/DE=1-206"/>
</dbReference>
<dbReference type="PDB" id="4V8J">
    <property type="method" value="X-ray"/>
    <property type="resolution" value="3.90 A"/>
    <property type="chains" value="BE/DE=1-206"/>
</dbReference>
<dbReference type="PDB" id="4V8N">
    <property type="method" value="X-ray"/>
    <property type="resolution" value="3.10 A"/>
    <property type="chains" value="BE/DE=1-206"/>
</dbReference>
<dbReference type="PDB" id="4V8O">
    <property type="method" value="X-ray"/>
    <property type="resolution" value="3.80 A"/>
    <property type="chains" value="BE=1-206"/>
</dbReference>
<dbReference type="PDB" id="4V8Q">
    <property type="method" value="X-ray"/>
    <property type="resolution" value="3.10 A"/>
    <property type="chains" value="AE=1-206"/>
</dbReference>
<dbReference type="PDB" id="4V8U">
    <property type="method" value="X-ray"/>
    <property type="resolution" value="3.70 A"/>
    <property type="chains" value="BE/DE=1-206"/>
</dbReference>
<dbReference type="PDB" id="4V8X">
    <property type="method" value="X-ray"/>
    <property type="resolution" value="3.35 A"/>
    <property type="chains" value="BE/DE=1-206"/>
</dbReference>
<dbReference type="PDB" id="4V90">
    <property type="method" value="X-ray"/>
    <property type="resolution" value="2.95 A"/>
    <property type="chains" value="BE=1-206"/>
</dbReference>
<dbReference type="PDB" id="4V95">
    <property type="method" value="X-ray"/>
    <property type="resolution" value="3.20 A"/>
    <property type="chains" value="BE/DE=1-206"/>
</dbReference>
<dbReference type="PDB" id="4V97">
    <property type="method" value="X-ray"/>
    <property type="resolution" value="3.52 A"/>
    <property type="chains" value="BE/DE=1-206"/>
</dbReference>
<dbReference type="PDB" id="4V9A">
    <property type="method" value="X-ray"/>
    <property type="resolution" value="3.30 A"/>
    <property type="chains" value="BE/DE=1-206"/>
</dbReference>
<dbReference type="PDB" id="4V9B">
    <property type="method" value="X-ray"/>
    <property type="resolution" value="3.10 A"/>
    <property type="chains" value="BE/DE=1-206"/>
</dbReference>
<dbReference type="PDB" id="4V9H">
    <property type="method" value="X-ray"/>
    <property type="resolution" value="2.86 A"/>
    <property type="chains" value="BE=1-206"/>
</dbReference>
<dbReference type="PDB" id="4V9I">
    <property type="method" value="X-ray"/>
    <property type="resolution" value="3.30 A"/>
    <property type="chains" value="BE/DE=1-204"/>
</dbReference>
<dbReference type="PDB" id="4V9R">
    <property type="method" value="X-ray"/>
    <property type="resolution" value="3.00 A"/>
    <property type="chains" value="BE/DE=1-206"/>
</dbReference>
<dbReference type="PDB" id="4V9S">
    <property type="method" value="X-ray"/>
    <property type="resolution" value="3.10 A"/>
    <property type="chains" value="BE/DE=1-206"/>
</dbReference>
<dbReference type="PDB" id="4W2E">
    <property type="method" value="X-ray"/>
    <property type="resolution" value="2.90 A"/>
    <property type="chains" value="E=1-206"/>
</dbReference>
<dbReference type="PDB" id="4W2F">
    <property type="method" value="X-ray"/>
    <property type="resolution" value="2.40 A"/>
    <property type="chains" value="BE/DE=1-206"/>
</dbReference>
<dbReference type="PDB" id="4W2G">
    <property type="method" value="X-ray"/>
    <property type="resolution" value="2.55 A"/>
    <property type="chains" value="BE/DE=1-206"/>
</dbReference>
<dbReference type="PDB" id="4W2H">
    <property type="method" value="X-ray"/>
    <property type="resolution" value="2.70 A"/>
    <property type="chains" value="BE/DE=1-206"/>
</dbReference>
<dbReference type="PDB" id="4W2I">
    <property type="method" value="X-ray"/>
    <property type="resolution" value="2.70 A"/>
    <property type="chains" value="BE/DE=1-206"/>
</dbReference>
<dbReference type="PDB" id="4W4G">
    <property type="method" value="X-ray"/>
    <property type="resolution" value="3.30 A"/>
    <property type="chains" value="RE/YE=1-206"/>
</dbReference>
<dbReference type="PDB" id="4WPO">
    <property type="method" value="X-ray"/>
    <property type="resolution" value="2.80 A"/>
    <property type="chains" value="AE/CE=1-206"/>
</dbReference>
<dbReference type="PDB" id="4WQ1">
    <property type="method" value="X-ray"/>
    <property type="resolution" value="3.10 A"/>
    <property type="chains" value="21/29=1-205"/>
</dbReference>
<dbReference type="PDB" id="4WQF">
    <property type="method" value="X-ray"/>
    <property type="resolution" value="2.80 A"/>
    <property type="chains" value="AE/CE=1-206"/>
</dbReference>
<dbReference type="PDB" id="4WQR">
    <property type="method" value="X-ray"/>
    <property type="resolution" value="3.15 A"/>
    <property type="chains" value="21/29=1-206"/>
</dbReference>
<dbReference type="PDB" id="4WQU">
    <property type="method" value="X-ray"/>
    <property type="resolution" value="2.80 A"/>
    <property type="chains" value="AE/CE=1-206"/>
</dbReference>
<dbReference type="PDB" id="4WQY">
    <property type="method" value="X-ray"/>
    <property type="resolution" value="2.80 A"/>
    <property type="chains" value="AE/CE=1-206"/>
</dbReference>
<dbReference type="PDB" id="4WR6">
    <property type="method" value="X-ray"/>
    <property type="resolution" value="3.05 A"/>
    <property type="chains" value="21/29=1-206"/>
</dbReference>
<dbReference type="PDB" id="4WRA">
    <property type="method" value="X-ray"/>
    <property type="resolution" value="3.05 A"/>
    <property type="chains" value="21/29=1-206"/>
</dbReference>
<dbReference type="PDB" id="4WRO">
    <property type="method" value="X-ray"/>
    <property type="resolution" value="3.05 A"/>
    <property type="chains" value="21=1-206"/>
</dbReference>
<dbReference type="PDB" id="4WSD">
    <property type="method" value="X-ray"/>
    <property type="resolution" value="2.95 A"/>
    <property type="chains" value="21/29=1-206"/>
</dbReference>
<dbReference type="PDB" id="4WSM">
    <property type="method" value="X-ray"/>
    <property type="resolution" value="3.30 A"/>
    <property type="chains" value="21/29=1-206"/>
</dbReference>
<dbReference type="PDB" id="4WT1">
    <property type="method" value="X-ray"/>
    <property type="resolution" value="3.05 A"/>
    <property type="chains" value="21/29=1-206"/>
</dbReference>
<dbReference type="PDB" id="4WT8">
    <property type="method" value="X-ray"/>
    <property type="resolution" value="3.40 A"/>
    <property type="chains" value="CC/DC=1-204"/>
</dbReference>
<dbReference type="PDB" id="4WU1">
    <property type="method" value="X-ray"/>
    <property type="resolution" value="3.20 A"/>
    <property type="chains" value="21/29=1-206"/>
</dbReference>
<dbReference type="PDB" id="4WZD">
    <property type="method" value="X-ray"/>
    <property type="resolution" value="3.10 A"/>
    <property type="chains" value="21/29=1-206"/>
</dbReference>
<dbReference type="PDB" id="4WZO">
    <property type="method" value="X-ray"/>
    <property type="resolution" value="3.30 A"/>
    <property type="chains" value="21/29=1-206"/>
</dbReference>
<dbReference type="PDB" id="4Y4O">
    <property type="method" value="X-ray"/>
    <property type="resolution" value="2.30 A"/>
    <property type="chains" value="1E/2E=1-206"/>
</dbReference>
<dbReference type="PDB" id="4Y4P">
    <property type="method" value="X-ray"/>
    <property type="resolution" value="2.50 A"/>
    <property type="chains" value="1E/2E=1-206"/>
</dbReference>
<dbReference type="PDB" id="4YPB">
    <property type="method" value="X-ray"/>
    <property type="resolution" value="3.40 A"/>
    <property type="chains" value="RE/YE=1-206"/>
</dbReference>
<dbReference type="PDB" id="4YZV">
    <property type="method" value="X-ray"/>
    <property type="resolution" value="3.10 A"/>
    <property type="chains" value="RE/YE=1-206"/>
</dbReference>
<dbReference type="PDB" id="4Z3S">
    <property type="method" value="X-ray"/>
    <property type="resolution" value="2.65 A"/>
    <property type="chains" value="1E/2E=1-206"/>
</dbReference>
<dbReference type="PDB" id="4Z8C">
    <property type="method" value="X-ray"/>
    <property type="resolution" value="2.90 A"/>
    <property type="chains" value="1E/2E=1-206"/>
</dbReference>
<dbReference type="PDB" id="4ZER">
    <property type="method" value="X-ray"/>
    <property type="resolution" value="3.10 A"/>
    <property type="chains" value="1E/2E=1-204"/>
</dbReference>
<dbReference type="PDB" id="4ZSN">
    <property type="method" value="X-ray"/>
    <property type="resolution" value="3.60 A"/>
    <property type="chains" value="RE/YE=1-206"/>
</dbReference>
<dbReference type="PDB" id="5A9Z">
    <property type="method" value="EM"/>
    <property type="resolution" value="4.70 A"/>
    <property type="chains" value="AE=1-206"/>
</dbReference>
<dbReference type="PDB" id="5AA0">
    <property type="method" value="EM"/>
    <property type="resolution" value="5.00 A"/>
    <property type="chains" value="AE=1-206"/>
</dbReference>
<dbReference type="PDB" id="5CZP">
    <property type="method" value="X-ray"/>
    <property type="resolution" value="3.30 A"/>
    <property type="chains" value="RE/YE=1-206"/>
</dbReference>
<dbReference type="PDB" id="5D8B">
    <property type="method" value="X-ray"/>
    <property type="resolution" value="3.63 A"/>
    <property type="chains" value="B/XA=1-206"/>
</dbReference>
<dbReference type="PDB" id="5DFE">
    <property type="method" value="X-ray"/>
    <property type="resolution" value="3.10 A"/>
    <property type="chains" value="RE/YE=1-206"/>
</dbReference>
<dbReference type="PDB" id="5DOX">
    <property type="method" value="X-ray"/>
    <property type="resolution" value="3.10 A"/>
    <property type="chains" value="1E/2E=1-206"/>
</dbReference>
<dbReference type="PDB" id="5DOY">
    <property type="method" value="X-ray"/>
    <property type="resolution" value="2.60 A"/>
    <property type="chains" value="1E/2E=1-206"/>
</dbReference>
<dbReference type="PDB" id="5E7K">
    <property type="method" value="X-ray"/>
    <property type="resolution" value="3.20 A"/>
    <property type="chains" value="21/29=1-206"/>
</dbReference>
<dbReference type="PDB" id="5E81">
    <property type="method" value="X-ray"/>
    <property type="resolution" value="2.95 A"/>
    <property type="chains" value="21/29=1-206"/>
</dbReference>
<dbReference type="PDB" id="5EL4">
    <property type="method" value="X-ray"/>
    <property type="resolution" value="3.15 A"/>
    <property type="chains" value="21/29=1-206"/>
</dbReference>
<dbReference type="PDB" id="5EL5">
    <property type="method" value="X-ray"/>
    <property type="resolution" value="3.15 A"/>
    <property type="chains" value="21/29=1-206"/>
</dbReference>
<dbReference type="PDB" id="5EL6">
    <property type="method" value="X-ray"/>
    <property type="resolution" value="3.10 A"/>
    <property type="chains" value="21/29=1-206"/>
</dbReference>
<dbReference type="PDB" id="5EL7">
    <property type="method" value="X-ray"/>
    <property type="resolution" value="3.15 A"/>
    <property type="chains" value="21/29=1-206"/>
</dbReference>
<dbReference type="PDB" id="5F8K">
    <property type="method" value="X-ray"/>
    <property type="resolution" value="2.80 A"/>
    <property type="chains" value="1E/2E=1-204"/>
</dbReference>
<dbReference type="PDB" id="5FDU">
    <property type="method" value="X-ray"/>
    <property type="resolution" value="2.90 A"/>
    <property type="chains" value="1E/2E=1-204"/>
</dbReference>
<dbReference type="PDB" id="5FDV">
    <property type="method" value="X-ray"/>
    <property type="resolution" value="2.80 A"/>
    <property type="chains" value="1E/2E=1-204"/>
</dbReference>
<dbReference type="PDB" id="5HAU">
    <property type="method" value="X-ray"/>
    <property type="resolution" value="3.00 A"/>
    <property type="chains" value="1E/2E=1-206"/>
</dbReference>
<dbReference type="PDB" id="5HCP">
    <property type="method" value="X-ray"/>
    <property type="resolution" value="2.89 A"/>
    <property type="chains" value="1E/2E=1-206"/>
</dbReference>
<dbReference type="PDB" id="5HCQ">
    <property type="method" value="X-ray"/>
    <property type="resolution" value="2.80 A"/>
    <property type="chains" value="1E/2E=1-206"/>
</dbReference>
<dbReference type="PDB" id="5HCR">
    <property type="method" value="X-ray"/>
    <property type="resolution" value="2.80 A"/>
    <property type="chains" value="1E/2E=1-206"/>
</dbReference>
<dbReference type="PDB" id="5HD1">
    <property type="method" value="X-ray"/>
    <property type="resolution" value="2.70 A"/>
    <property type="chains" value="1E/2E=1-206"/>
</dbReference>
<dbReference type="PDB" id="5IB7">
    <property type="method" value="X-ray"/>
    <property type="resolution" value="2.99 A"/>
    <property type="chains" value="21/29=1-206"/>
</dbReference>
<dbReference type="PDB" id="5IB8">
    <property type="method" value="X-ray"/>
    <property type="resolution" value="3.13 A"/>
    <property type="chains" value="21/29=1-206"/>
</dbReference>
<dbReference type="PDB" id="5IBB">
    <property type="method" value="X-ray"/>
    <property type="resolution" value="2.96 A"/>
    <property type="chains" value="21/29=1-206"/>
</dbReference>
<dbReference type="PDB" id="5IMQ">
    <property type="method" value="EM"/>
    <property type="resolution" value="3.80 A"/>
    <property type="chains" value="b=1-206"/>
</dbReference>
<dbReference type="PDB" id="5IMR">
    <property type="method" value="EM"/>
    <property type="chains" value="b=1-206"/>
</dbReference>
<dbReference type="PDB" id="5J30">
    <property type="method" value="X-ray"/>
    <property type="resolution" value="3.20 A"/>
    <property type="chains" value="RE/YE=1-206"/>
</dbReference>
<dbReference type="PDB" id="5J3C">
    <property type="method" value="X-ray"/>
    <property type="resolution" value="3.04 A"/>
    <property type="chains" value="RE/YE=1-206"/>
</dbReference>
<dbReference type="PDB" id="5J4B">
    <property type="method" value="X-ray"/>
    <property type="resolution" value="2.60 A"/>
    <property type="chains" value="1E/2E=1-206"/>
</dbReference>
<dbReference type="PDB" id="5J4C">
    <property type="method" value="X-ray"/>
    <property type="resolution" value="2.80 A"/>
    <property type="chains" value="1E/2E=1-206"/>
</dbReference>
<dbReference type="PDB" id="5J8B">
    <property type="method" value="X-ray"/>
    <property type="resolution" value="2.60 A"/>
    <property type="chains" value="E=1-206"/>
</dbReference>
<dbReference type="PDB" id="5NDJ">
    <property type="method" value="X-ray"/>
    <property type="resolution" value="3.15 A"/>
    <property type="chains" value="21/29=1-206"/>
</dbReference>
<dbReference type="PDB" id="5NDK">
    <property type="method" value="X-ray"/>
    <property type="resolution" value="2.95 A"/>
    <property type="chains" value="21/29=1-206"/>
</dbReference>
<dbReference type="PDB" id="5OT7">
    <property type="method" value="EM"/>
    <property type="resolution" value="3.80 A"/>
    <property type="chains" value="h=1-205"/>
</dbReference>
<dbReference type="PDB" id="5UQ7">
    <property type="method" value="EM"/>
    <property type="resolution" value="3.50 A"/>
    <property type="chains" value="E=1-204"/>
</dbReference>
<dbReference type="PDB" id="5UQ8">
    <property type="method" value="EM"/>
    <property type="resolution" value="3.20 A"/>
    <property type="chains" value="E=1-204"/>
</dbReference>
<dbReference type="PDB" id="5VP2">
    <property type="method" value="X-ray"/>
    <property type="resolution" value="2.80 A"/>
    <property type="chains" value="1E/2E=1-206"/>
</dbReference>
<dbReference type="PDB" id="5VPO">
    <property type="method" value="X-ray"/>
    <property type="resolution" value="3.34 A"/>
    <property type="chains" value="RE/YE=1-206"/>
</dbReference>
<dbReference type="PDB" id="5VPP">
    <property type="method" value="X-ray"/>
    <property type="resolution" value="3.90 A"/>
    <property type="chains" value="RE/YE=1-206"/>
</dbReference>
<dbReference type="PDB" id="5W4K">
    <property type="method" value="X-ray"/>
    <property type="resolution" value="2.70 A"/>
    <property type="chains" value="1E/2E=1-206"/>
</dbReference>
<dbReference type="PDB" id="5WIS">
    <property type="method" value="X-ray"/>
    <property type="resolution" value="2.70 A"/>
    <property type="chains" value="1E/2E=1-206"/>
</dbReference>
<dbReference type="PDB" id="5WIT">
    <property type="method" value="X-ray"/>
    <property type="resolution" value="2.60 A"/>
    <property type="chains" value="1E/2E=1-206"/>
</dbReference>
<dbReference type="PDB" id="5ZLU">
    <property type="method" value="EM"/>
    <property type="resolution" value="3.60 A"/>
    <property type="chains" value="a=1-206"/>
</dbReference>
<dbReference type="PDB" id="6BUW">
    <property type="method" value="X-ray"/>
    <property type="resolution" value="3.50 A"/>
    <property type="chains" value="RE/YE=1-206"/>
</dbReference>
<dbReference type="PDB" id="6BZ6">
    <property type="method" value="X-ray"/>
    <property type="resolution" value="3.18 A"/>
    <property type="chains" value="RE/YE=1-206"/>
</dbReference>
<dbReference type="PDB" id="6BZ7">
    <property type="method" value="X-ray"/>
    <property type="resolution" value="3.68 A"/>
    <property type="chains" value="RE/YE=1-206"/>
</dbReference>
<dbReference type="PDB" id="6BZ8">
    <property type="method" value="X-ray"/>
    <property type="resolution" value="3.74 A"/>
    <property type="chains" value="RE/YE=1-206"/>
</dbReference>
<dbReference type="PDB" id="6C5L">
    <property type="method" value="X-ray"/>
    <property type="resolution" value="3.20 A"/>
    <property type="chains" value="BE/DE=1-206"/>
</dbReference>
<dbReference type="PDB" id="6CAE">
    <property type="method" value="X-ray"/>
    <property type="resolution" value="2.60 A"/>
    <property type="chains" value="1E/2E=1-206"/>
</dbReference>
<dbReference type="PDB" id="6CFJ">
    <property type="method" value="X-ray"/>
    <property type="resolution" value="2.80 A"/>
    <property type="chains" value="1E/2E=1-206"/>
</dbReference>
<dbReference type="PDB" id="6CFK">
    <property type="method" value="X-ray"/>
    <property type="resolution" value="2.70 A"/>
    <property type="chains" value="1E/2E=1-206"/>
</dbReference>
<dbReference type="PDB" id="6CFL">
    <property type="method" value="X-ray"/>
    <property type="resolution" value="2.60 A"/>
    <property type="chains" value="1E/2E=1-206"/>
</dbReference>
<dbReference type="PDB" id="6CZR">
    <property type="method" value="X-ray"/>
    <property type="resolution" value="3.14 A"/>
    <property type="chains" value="1E/2E=1-204"/>
</dbReference>
<dbReference type="PDB" id="6FKR">
    <property type="method" value="X-ray"/>
    <property type="resolution" value="3.20 A"/>
    <property type="chains" value="1E/2E=1-204"/>
</dbReference>
<dbReference type="PDB" id="6GSJ">
    <property type="method" value="X-ray"/>
    <property type="resolution" value="2.96 A"/>
    <property type="chains" value="21/29=1-206"/>
</dbReference>
<dbReference type="PDB" id="6GSK">
    <property type="method" value="X-ray"/>
    <property type="resolution" value="3.36 A"/>
    <property type="chains" value="21/29=1-206"/>
</dbReference>
<dbReference type="PDB" id="6GSL">
    <property type="method" value="X-ray"/>
    <property type="resolution" value="3.16 A"/>
    <property type="chains" value="21/29=1-206"/>
</dbReference>
<dbReference type="PDB" id="6GZQ">
    <property type="method" value="EM"/>
    <property type="resolution" value="3.28 A"/>
    <property type="chains" value="D1=1-205"/>
</dbReference>
<dbReference type="PDB" id="6GZX">
    <property type="method" value="EM"/>
    <property type="resolution" value="4.57 A"/>
    <property type="chains" value="D1/D2=1-205"/>
</dbReference>
<dbReference type="PDB" id="6GZZ">
    <property type="method" value="EM"/>
    <property type="resolution" value="4.13 A"/>
    <property type="chains" value="D1/D2=1-205"/>
</dbReference>
<dbReference type="PDB" id="6N9E">
    <property type="method" value="X-ray"/>
    <property type="resolution" value="3.70 A"/>
    <property type="chains" value="1E/2E=1-206"/>
</dbReference>
<dbReference type="PDB" id="6N9F">
    <property type="method" value="X-ray"/>
    <property type="resolution" value="3.70 A"/>
    <property type="chains" value="1E/2E=1-206"/>
</dbReference>
<dbReference type="PDB" id="6ND5">
    <property type="method" value="X-ray"/>
    <property type="resolution" value="2.60 A"/>
    <property type="chains" value="1E/2E=1-206"/>
</dbReference>
<dbReference type="PDB" id="6ND6">
    <property type="method" value="X-ray"/>
    <property type="resolution" value="2.85 A"/>
    <property type="chains" value="1E/2E=1-206"/>
</dbReference>
<dbReference type="PDB" id="6NDK">
    <property type="method" value="X-ray"/>
    <property type="resolution" value="3.64 A"/>
    <property type="chains" value="RE/YE=1-206"/>
</dbReference>
<dbReference type="PDB" id="6NSH">
    <property type="method" value="X-ray"/>
    <property type="resolution" value="3.40 A"/>
    <property type="chains" value="RE/YE=1-206"/>
</dbReference>
<dbReference type="PDB" id="6NTA">
    <property type="method" value="X-ray"/>
    <property type="resolution" value="3.10 A"/>
    <property type="chains" value="RE/YE=1-206"/>
</dbReference>
<dbReference type="PDB" id="6NUO">
    <property type="method" value="X-ray"/>
    <property type="resolution" value="3.20 A"/>
    <property type="chains" value="RE/YE=1-206"/>
</dbReference>
<dbReference type="PDB" id="6NWY">
    <property type="method" value="X-ray"/>
    <property type="resolution" value="3.50 A"/>
    <property type="chains" value="RE/YE=1-206"/>
</dbReference>
<dbReference type="PDB" id="6O3M">
    <property type="method" value="X-ray"/>
    <property type="resolution" value="3.97 A"/>
    <property type="chains" value="RE/YE=1-206"/>
</dbReference>
<dbReference type="PDB" id="6O97">
    <property type="method" value="X-ray"/>
    <property type="resolution" value="2.75 A"/>
    <property type="chains" value="1E/2E=1-206"/>
</dbReference>
<dbReference type="PDB" id="6OF1">
    <property type="method" value="X-ray"/>
    <property type="resolution" value="2.80 A"/>
    <property type="chains" value="1E/2E=1-206"/>
</dbReference>
<dbReference type="PDB" id="6OF6">
    <property type="method" value="X-ray"/>
    <property type="resolution" value="3.20 A"/>
    <property type="chains" value="RE/YE=1-206"/>
</dbReference>
<dbReference type="PDB" id="6OJ2">
    <property type="method" value="X-ray"/>
    <property type="resolution" value="3.20 A"/>
    <property type="chains" value="RE/YE=1-206"/>
</dbReference>
<dbReference type="PDB" id="6OPE">
    <property type="method" value="X-ray"/>
    <property type="resolution" value="3.10 A"/>
    <property type="chains" value="RE/YE=1-206"/>
</dbReference>
<dbReference type="PDB" id="6ORD">
    <property type="method" value="X-ray"/>
    <property type="resolution" value="3.10 A"/>
    <property type="chains" value="RE/YE=1-206"/>
</dbReference>
<dbReference type="PDB" id="6OSI">
    <property type="method" value="X-ray"/>
    <property type="resolution" value="4.14 A"/>
    <property type="chains" value="RE/YE=1-206"/>
</dbReference>
<dbReference type="PDB" id="6OTR">
    <property type="method" value="X-ray"/>
    <property type="resolution" value="3.12 A"/>
    <property type="chains" value="RE/YE=1-206"/>
</dbReference>
<dbReference type="PDB" id="6OXA">
    <property type="method" value="X-ray"/>
    <property type="resolution" value="3.25 A"/>
    <property type="chains" value="RE/YE=1-206"/>
</dbReference>
<dbReference type="PDB" id="6OXI">
    <property type="method" value="X-ray"/>
    <property type="resolution" value="3.50 A"/>
    <property type="chains" value="RE/YE=1-206"/>
</dbReference>
<dbReference type="PDB" id="6Q95">
    <property type="method" value="EM"/>
    <property type="resolution" value="3.70 A"/>
    <property type="chains" value="C=1-205"/>
</dbReference>
<dbReference type="PDB" id="6QNQ">
    <property type="method" value="X-ray"/>
    <property type="resolution" value="3.50 A"/>
    <property type="chains" value="21/29=1-206"/>
</dbReference>
<dbReference type="PDB" id="6QNR">
    <property type="method" value="X-ray"/>
    <property type="resolution" value="3.10 A"/>
    <property type="chains" value="21/29=1-206"/>
</dbReference>
<dbReference type="PDB" id="6UCQ">
    <property type="method" value="X-ray"/>
    <property type="resolution" value="3.50 A"/>
    <property type="chains" value="1E/2E=1-206"/>
</dbReference>
<dbReference type="PDB" id="6UO1">
    <property type="method" value="X-ray"/>
    <property type="resolution" value="2.95 A"/>
    <property type="chains" value="1E/2E=1-206"/>
</dbReference>
<dbReference type="PDB" id="6XHV">
    <property type="method" value="X-ray"/>
    <property type="resolution" value="2.40 A"/>
    <property type="chains" value="1E/2E=1-206"/>
</dbReference>
<dbReference type="PDB" id="6XHW">
    <property type="method" value="X-ray"/>
    <property type="resolution" value="2.50 A"/>
    <property type="chains" value="1E/2E=1-206"/>
</dbReference>
<dbReference type="PDB" id="6XHX">
    <property type="method" value="X-ray"/>
    <property type="resolution" value="2.55 A"/>
    <property type="chains" value="1E/2E=1-206"/>
</dbReference>
<dbReference type="PDB" id="6XHY">
    <property type="method" value="X-ray"/>
    <property type="resolution" value="2.60 A"/>
    <property type="chains" value="1E/2E=1-206"/>
</dbReference>
<dbReference type="PDB" id="6XQD">
    <property type="method" value="X-ray"/>
    <property type="resolution" value="2.80 A"/>
    <property type="chains" value="1E/2E=1-206"/>
</dbReference>
<dbReference type="PDB" id="6XQE">
    <property type="method" value="X-ray"/>
    <property type="resolution" value="3.00 A"/>
    <property type="chains" value="1E/2E=1-206"/>
</dbReference>
<dbReference type="PDB" id="7AZO">
    <property type="method" value="X-ray"/>
    <property type="resolution" value="3.30 A"/>
    <property type="chains" value="L3A/L3B=1-206"/>
</dbReference>
<dbReference type="PDB" id="7AZS">
    <property type="method" value="X-ray"/>
    <property type="resolution" value="3.10 A"/>
    <property type="chains" value="L3A/L3B=1-206"/>
</dbReference>
<dbReference type="PDB" id="7JQL">
    <property type="method" value="X-ray"/>
    <property type="resolution" value="3.00 A"/>
    <property type="chains" value="1E/2E=1-206"/>
</dbReference>
<dbReference type="PDB" id="7JQM">
    <property type="method" value="X-ray"/>
    <property type="resolution" value="3.05 A"/>
    <property type="chains" value="1E/2E=1-206"/>
</dbReference>
<dbReference type="PDB" id="7LH5">
    <property type="method" value="X-ray"/>
    <property type="resolution" value="3.27 A"/>
    <property type="chains" value="BE/DE=1-206"/>
</dbReference>
<dbReference type="PDB" id="7MD7">
    <property type="method" value="X-ray"/>
    <property type="resolution" value="2.80 A"/>
    <property type="chains" value="1E/2E=1-206"/>
</dbReference>
<dbReference type="PDB" id="7RQ8">
    <property type="method" value="X-ray"/>
    <property type="resolution" value="2.50 A"/>
    <property type="chains" value="1E/2E=1-206"/>
</dbReference>
<dbReference type="PDB" id="7RQ9">
    <property type="method" value="X-ray"/>
    <property type="resolution" value="2.60 A"/>
    <property type="chains" value="1E/2E=1-206"/>
</dbReference>
<dbReference type="PDB" id="7RQA">
    <property type="method" value="X-ray"/>
    <property type="resolution" value="2.40 A"/>
    <property type="chains" value="1E/2E=1-206"/>
</dbReference>
<dbReference type="PDB" id="7RQB">
    <property type="method" value="X-ray"/>
    <property type="resolution" value="2.45 A"/>
    <property type="chains" value="1E/2E=1-206"/>
</dbReference>
<dbReference type="PDB" id="7RQC">
    <property type="method" value="X-ray"/>
    <property type="resolution" value="2.50 A"/>
    <property type="chains" value="1E/2E=1-206"/>
</dbReference>
<dbReference type="PDB" id="7RQD">
    <property type="method" value="X-ray"/>
    <property type="resolution" value="2.50 A"/>
    <property type="chains" value="1E/2E=1-206"/>
</dbReference>
<dbReference type="PDB" id="7RQE">
    <property type="method" value="X-ray"/>
    <property type="resolution" value="2.40 A"/>
    <property type="chains" value="1E/2E=1-206"/>
</dbReference>
<dbReference type="PDB" id="7U2H">
    <property type="method" value="X-ray"/>
    <property type="resolution" value="2.55 A"/>
    <property type="chains" value="1E/2E=1-206"/>
</dbReference>
<dbReference type="PDB" id="7U2I">
    <property type="method" value="X-ray"/>
    <property type="resolution" value="2.55 A"/>
    <property type="chains" value="1E/2E=1-206"/>
</dbReference>
<dbReference type="PDB" id="7U2J">
    <property type="method" value="X-ray"/>
    <property type="resolution" value="2.55 A"/>
    <property type="chains" value="1E/2E=1-206"/>
</dbReference>
<dbReference type="PDB" id="8CVJ">
    <property type="method" value="X-ray"/>
    <property type="resolution" value="2.40 A"/>
    <property type="chains" value="1E/2E=1-206"/>
</dbReference>
<dbReference type="PDB" id="8CVK">
    <property type="method" value="X-ray"/>
    <property type="resolution" value="2.50 A"/>
    <property type="chains" value="1E/2E=1-206"/>
</dbReference>
<dbReference type="PDB" id="8CVL">
    <property type="method" value="X-ray"/>
    <property type="resolution" value="2.30 A"/>
    <property type="chains" value="1E/2E=1-206"/>
</dbReference>
<dbReference type="PDB" id="8EKB">
    <property type="method" value="X-ray"/>
    <property type="resolution" value="2.70 A"/>
    <property type="chains" value="1E/2E=1-206"/>
</dbReference>
<dbReference type="PDB" id="8EV6">
    <property type="method" value="X-ray"/>
    <property type="resolution" value="2.95 A"/>
    <property type="chains" value="1E/2E=1-206"/>
</dbReference>
<dbReference type="PDB" id="8EV7">
    <property type="method" value="X-ray"/>
    <property type="resolution" value="2.89 A"/>
    <property type="chains" value="1E/2E=1-206"/>
</dbReference>
<dbReference type="PDB" id="8FC1">
    <property type="method" value="X-ray"/>
    <property type="resolution" value="2.50 A"/>
    <property type="chains" value="1E/2E=1-206"/>
</dbReference>
<dbReference type="PDB" id="8FC2">
    <property type="method" value="X-ray"/>
    <property type="resolution" value="2.50 A"/>
    <property type="chains" value="1E/2E=1-206"/>
</dbReference>
<dbReference type="PDB" id="8FC3">
    <property type="method" value="X-ray"/>
    <property type="resolution" value="2.60 A"/>
    <property type="chains" value="1E/2E=1-206"/>
</dbReference>
<dbReference type="PDB" id="8FC4">
    <property type="method" value="X-ray"/>
    <property type="resolution" value="2.45 A"/>
    <property type="chains" value="1E/2E=1-206"/>
</dbReference>
<dbReference type="PDB" id="8FC5">
    <property type="method" value="X-ray"/>
    <property type="resolution" value="2.65 A"/>
    <property type="chains" value="1E/2E=1-206"/>
</dbReference>
<dbReference type="PDB" id="8FC6">
    <property type="method" value="X-ray"/>
    <property type="resolution" value="2.35 A"/>
    <property type="chains" value="1E/2E=1-206"/>
</dbReference>
<dbReference type="PDB" id="8FOM">
    <property type="method" value="X-ray"/>
    <property type="resolution" value="3.58 A"/>
    <property type="chains" value="RE/YE=1-206"/>
</dbReference>
<dbReference type="PDB" id="8FON">
    <property type="method" value="X-ray"/>
    <property type="resolution" value="3.64 A"/>
    <property type="chains" value="RE/YE=1-206"/>
</dbReference>
<dbReference type="PDB" id="8G29">
    <property type="method" value="X-ray"/>
    <property type="resolution" value="2.55 A"/>
    <property type="chains" value="1E/2E=1-206"/>
</dbReference>
<dbReference type="PDB" id="8G2A">
    <property type="method" value="X-ray"/>
    <property type="resolution" value="2.45 A"/>
    <property type="chains" value="1E/2E=1-206"/>
</dbReference>
<dbReference type="PDB" id="8G2B">
    <property type="method" value="X-ray"/>
    <property type="resolution" value="2.55 A"/>
    <property type="chains" value="1E/2E=1-206"/>
</dbReference>
<dbReference type="PDB" id="8G2C">
    <property type="method" value="X-ray"/>
    <property type="resolution" value="2.65 A"/>
    <property type="chains" value="1E/2E=1-206"/>
</dbReference>
<dbReference type="PDB" id="8G2D">
    <property type="method" value="X-ray"/>
    <property type="resolution" value="2.70 A"/>
    <property type="chains" value="1E/2E=1-206"/>
</dbReference>
<dbReference type="PDB" id="8T8B">
    <property type="method" value="X-ray"/>
    <property type="resolution" value="2.65 A"/>
    <property type="chains" value="1E/2E=1-206"/>
</dbReference>
<dbReference type="PDB" id="8T8C">
    <property type="method" value="X-ray"/>
    <property type="resolution" value="2.60 A"/>
    <property type="chains" value="1E/2E=1-206"/>
</dbReference>
<dbReference type="PDB" id="8UD6">
    <property type="method" value="X-ray"/>
    <property type="resolution" value="2.70 A"/>
    <property type="chains" value="1E/2E=1-206"/>
</dbReference>
<dbReference type="PDB" id="8UD7">
    <property type="method" value="X-ray"/>
    <property type="resolution" value="2.55 A"/>
    <property type="chains" value="1E/2E=1-206"/>
</dbReference>
<dbReference type="PDB" id="8UD8">
    <property type="method" value="X-ray"/>
    <property type="resolution" value="2.60 A"/>
    <property type="chains" value="1E/2E=1-206"/>
</dbReference>
<dbReference type="PDB" id="8UVR">
    <property type="method" value="X-ray"/>
    <property type="resolution" value="2.60 A"/>
    <property type="chains" value="1E/2E=1-206"/>
</dbReference>
<dbReference type="PDB" id="8UVS">
    <property type="method" value="X-ray"/>
    <property type="resolution" value="2.75 A"/>
    <property type="chains" value="1E/2E=1-206"/>
</dbReference>
<dbReference type="PDB" id="8VTU">
    <property type="method" value="X-ray"/>
    <property type="resolution" value="2.40 A"/>
    <property type="chains" value="1E/2E=1-206"/>
</dbReference>
<dbReference type="PDB" id="8VTV">
    <property type="method" value="X-ray"/>
    <property type="resolution" value="2.55 A"/>
    <property type="chains" value="1E/2E=1-206"/>
</dbReference>
<dbReference type="PDB" id="8VTW">
    <property type="method" value="X-ray"/>
    <property type="resolution" value="2.35 A"/>
    <property type="chains" value="1E/2E=1-206"/>
</dbReference>
<dbReference type="PDB" id="8VTX">
    <property type="method" value="X-ray"/>
    <property type="resolution" value="2.40 A"/>
    <property type="chains" value="1E/2E=1-206"/>
</dbReference>
<dbReference type="PDB" id="8VTY">
    <property type="method" value="X-ray"/>
    <property type="resolution" value="2.60 A"/>
    <property type="chains" value="1E/2E=1-206"/>
</dbReference>
<dbReference type="PDB" id="8WV1">
    <property type="method" value="X-ray"/>
    <property type="resolution" value="3.99 A"/>
    <property type="chains" value="D/d=1-206"/>
</dbReference>
<dbReference type="PDB" id="9B00">
    <property type="method" value="X-ray"/>
    <property type="resolution" value="2.80 A"/>
    <property type="chains" value="1E/2E=1-206"/>
</dbReference>
<dbReference type="PDB" id="9D0J">
    <property type="method" value="X-ray"/>
    <property type="resolution" value="2.50 A"/>
    <property type="chains" value="1E/2E=1-206"/>
</dbReference>
<dbReference type="PDB" id="9D7R">
    <property type="method" value="X-ray"/>
    <property type="resolution" value="2.70 A"/>
    <property type="chains" value="1E/2E=1-206"/>
</dbReference>
<dbReference type="PDB" id="9D7S">
    <property type="method" value="X-ray"/>
    <property type="resolution" value="2.85 A"/>
    <property type="chains" value="1E/2E=1-206"/>
</dbReference>
<dbReference type="PDB" id="9D7T">
    <property type="method" value="X-ray"/>
    <property type="resolution" value="2.70 A"/>
    <property type="chains" value="1E/2E=1-206"/>
</dbReference>
<dbReference type="PDB" id="9DFC">
    <property type="method" value="X-ray"/>
    <property type="resolution" value="2.50 A"/>
    <property type="chains" value="1E/2E=1-206"/>
</dbReference>
<dbReference type="PDB" id="9DFD">
    <property type="method" value="X-ray"/>
    <property type="resolution" value="2.60 A"/>
    <property type="chains" value="1E/2E=1-206"/>
</dbReference>
<dbReference type="PDB" id="9DFE">
    <property type="method" value="X-ray"/>
    <property type="resolution" value="2.60 A"/>
    <property type="chains" value="1E/2E=1-206"/>
</dbReference>
<dbReference type="PDBsum" id="1VVJ"/>
<dbReference type="PDBsum" id="1VY4"/>
<dbReference type="PDBsum" id="1VY5"/>
<dbReference type="PDBsum" id="1VY6"/>
<dbReference type="PDBsum" id="1VY7"/>
<dbReference type="PDBsum" id="4L47"/>
<dbReference type="PDBsum" id="4L71"/>
<dbReference type="PDBsum" id="4LEL"/>
<dbReference type="PDBsum" id="4LFZ"/>
<dbReference type="PDBsum" id="4LNT"/>
<dbReference type="PDBsum" id="4LSK"/>
<dbReference type="PDBsum" id="4LT8"/>
<dbReference type="PDBsum" id="4P6F"/>
<dbReference type="PDBsum" id="4P70"/>
<dbReference type="PDBsum" id="4TUA"/>
<dbReference type="PDBsum" id="4TUB"/>
<dbReference type="PDBsum" id="4TUC"/>
<dbReference type="PDBsum" id="4TUD"/>
<dbReference type="PDBsum" id="4TUE"/>
<dbReference type="PDBsum" id="4V42"/>
<dbReference type="PDBsum" id="4V4P"/>
<dbReference type="PDBsum" id="4V4X"/>
<dbReference type="PDBsum" id="4V4Y"/>
<dbReference type="PDBsum" id="4V4Z"/>
<dbReference type="PDBsum" id="4V51"/>
<dbReference type="PDBsum" id="4V5A"/>
<dbReference type="PDBsum" id="4V5C"/>
<dbReference type="PDBsum" id="4V5D"/>
<dbReference type="PDBsum" id="4V5E"/>
<dbReference type="PDBsum" id="4V5F"/>
<dbReference type="PDBsum" id="4V5G"/>
<dbReference type="PDBsum" id="4V5J"/>
<dbReference type="PDBsum" id="4V5K"/>
<dbReference type="PDBsum" id="4V5L"/>
<dbReference type="PDBsum" id="4V5M"/>
<dbReference type="PDBsum" id="4V5N"/>
<dbReference type="PDBsum" id="4V5P"/>
<dbReference type="PDBsum" id="4V5Q"/>
<dbReference type="PDBsum" id="4V5R"/>
<dbReference type="PDBsum" id="4V5S"/>
<dbReference type="PDBsum" id="4V68"/>
<dbReference type="PDBsum" id="4V6A"/>
<dbReference type="PDBsum" id="4V6F"/>
<dbReference type="PDBsum" id="4V6G"/>
<dbReference type="PDBsum" id="4V7J"/>
<dbReference type="PDBsum" id="4V7K"/>
<dbReference type="PDBsum" id="4V7L"/>
<dbReference type="PDBsum" id="4V7M"/>
<dbReference type="PDBsum" id="4V7W"/>
<dbReference type="PDBsum" id="4V7X"/>
<dbReference type="PDBsum" id="4V7Y"/>
<dbReference type="PDBsum" id="4V7Z"/>
<dbReference type="PDBsum" id="4V87"/>
<dbReference type="PDBsum" id="4V8A"/>
<dbReference type="PDBsum" id="4V8B"/>
<dbReference type="PDBsum" id="4V8C"/>
<dbReference type="PDBsum" id="4V8D"/>
<dbReference type="PDBsum" id="4V8E"/>
<dbReference type="PDBsum" id="4V8F"/>
<dbReference type="PDBsum" id="4V8G"/>
<dbReference type="PDBsum" id="4V8H"/>
<dbReference type="PDBsum" id="4V8I"/>
<dbReference type="PDBsum" id="4V8J"/>
<dbReference type="PDBsum" id="4V8N"/>
<dbReference type="PDBsum" id="4V8O"/>
<dbReference type="PDBsum" id="4V8Q"/>
<dbReference type="PDBsum" id="4V8U"/>
<dbReference type="PDBsum" id="4V8X"/>
<dbReference type="PDBsum" id="4V90"/>
<dbReference type="PDBsum" id="4V95"/>
<dbReference type="PDBsum" id="4V97"/>
<dbReference type="PDBsum" id="4V9A"/>
<dbReference type="PDBsum" id="4V9B"/>
<dbReference type="PDBsum" id="4V9H"/>
<dbReference type="PDBsum" id="4V9I"/>
<dbReference type="PDBsum" id="4V9R"/>
<dbReference type="PDBsum" id="4V9S"/>
<dbReference type="PDBsum" id="4W2E"/>
<dbReference type="PDBsum" id="4W2F"/>
<dbReference type="PDBsum" id="4W2G"/>
<dbReference type="PDBsum" id="4W2H"/>
<dbReference type="PDBsum" id="4W2I"/>
<dbReference type="PDBsum" id="4W4G"/>
<dbReference type="PDBsum" id="4WPO"/>
<dbReference type="PDBsum" id="4WQ1"/>
<dbReference type="PDBsum" id="4WQF"/>
<dbReference type="PDBsum" id="4WQR"/>
<dbReference type="PDBsum" id="4WQU"/>
<dbReference type="PDBsum" id="4WQY"/>
<dbReference type="PDBsum" id="4WR6"/>
<dbReference type="PDBsum" id="4WRA"/>
<dbReference type="PDBsum" id="4WRO"/>
<dbReference type="PDBsum" id="4WSD"/>
<dbReference type="PDBsum" id="4WSM"/>
<dbReference type="PDBsum" id="4WT1"/>
<dbReference type="PDBsum" id="4WT8"/>
<dbReference type="PDBsum" id="4WU1"/>
<dbReference type="PDBsum" id="4WZD"/>
<dbReference type="PDBsum" id="4WZO"/>
<dbReference type="PDBsum" id="4Y4O"/>
<dbReference type="PDBsum" id="4Y4P"/>
<dbReference type="PDBsum" id="4YPB"/>
<dbReference type="PDBsum" id="4YZV"/>
<dbReference type="PDBsum" id="4Z3S"/>
<dbReference type="PDBsum" id="4Z8C"/>
<dbReference type="PDBsum" id="4ZER"/>
<dbReference type="PDBsum" id="4ZSN"/>
<dbReference type="PDBsum" id="5A9Z"/>
<dbReference type="PDBsum" id="5AA0"/>
<dbReference type="PDBsum" id="5CZP"/>
<dbReference type="PDBsum" id="5D8B"/>
<dbReference type="PDBsum" id="5DFE"/>
<dbReference type="PDBsum" id="5DOX"/>
<dbReference type="PDBsum" id="5DOY"/>
<dbReference type="PDBsum" id="5E7K"/>
<dbReference type="PDBsum" id="5E81"/>
<dbReference type="PDBsum" id="5EL4"/>
<dbReference type="PDBsum" id="5EL5"/>
<dbReference type="PDBsum" id="5EL6"/>
<dbReference type="PDBsum" id="5EL7"/>
<dbReference type="PDBsum" id="5F8K"/>
<dbReference type="PDBsum" id="5FDU"/>
<dbReference type="PDBsum" id="5FDV"/>
<dbReference type="PDBsum" id="5HAU"/>
<dbReference type="PDBsum" id="5HCP"/>
<dbReference type="PDBsum" id="5HCQ"/>
<dbReference type="PDBsum" id="5HCR"/>
<dbReference type="PDBsum" id="5HD1"/>
<dbReference type="PDBsum" id="5IB7"/>
<dbReference type="PDBsum" id="5IB8"/>
<dbReference type="PDBsum" id="5IBB"/>
<dbReference type="PDBsum" id="5IMQ"/>
<dbReference type="PDBsum" id="5IMR"/>
<dbReference type="PDBsum" id="5J30"/>
<dbReference type="PDBsum" id="5J3C"/>
<dbReference type="PDBsum" id="5J4B"/>
<dbReference type="PDBsum" id="5J4C"/>
<dbReference type="PDBsum" id="5J8B"/>
<dbReference type="PDBsum" id="5NDJ"/>
<dbReference type="PDBsum" id="5NDK"/>
<dbReference type="PDBsum" id="5OT7"/>
<dbReference type="PDBsum" id="5UQ7"/>
<dbReference type="PDBsum" id="5UQ8"/>
<dbReference type="PDBsum" id="5VP2"/>
<dbReference type="PDBsum" id="5VPO"/>
<dbReference type="PDBsum" id="5VPP"/>
<dbReference type="PDBsum" id="5W4K"/>
<dbReference type="PDBsum" id="5WIS"/>
<dbReference type="PDBsum" id="5WIT"/>
<dbReference type="PDBsum" id="5ZLU"/>
<dbReference type="PDBsum" id="6BUW"/>
<dbReference type="PDBsum" id="6BZ6"/>
<dbReference type="PDBsum" id="6BZ7"/>
<dbReference type="PDBsum" id="6BZ8"/>
<dbReference type="PDBsum" id="6C5L"/>
<dbReference type="PDBsum" id="6CAE"/>
<dbReference type="PDBsum" id="6CFJ"/>
<dbReference type="PDBsum" id="6CFK"/>
<dbReference type="PDBsum" id="6CFL"/>
<dbReference type="PDBsum" id="6CZR"/>
<dbReference type="PDBsum" id="6FKR"/>
<dbReference type="PDBsum" id="6GSJ"/>
<dbReference type="PDBsum" id="6GSK"/>
<dbReference type="PDBsum" id="6GSL"/>
<dbReference type="PDBsum" id="6GZQ"/>
<dbReference type="PDBsum" id="6GZX"/>
<dbReference type="PDBsum" id="6GZZ"/>
<dbReference type="PDBsum" id="6N9E"/>
<dbReference type="PDBsum" id="6N9F"/>
<dbReference type="PDBsum" id="6ND5"/>
<dbReference type="PDBsum" id="6ND6"/>
<dbReference type="PDBsum" id="6NDK"/>
<dbReference type="PDBsum" id="6NSH"/>
<dbReference type="PDBsum" id="6NTA"/>
<dbReference type="PDBsum" id="6NUO"/>
<dbReference type="PDBsum" id="6NWY"/>
<dbReference type="PDBsum" id="6O3M"/>
<dbReference type="PDBsum" id="6O97"/>
<dbReference type="PDBsum" id="6OF1"/>
<dbReference type="PDBsum" id="6OF6"/>
<dbReference type="PDBsum" id="6OJ2"/>
<dbReference type="PDBsum" id="6OPE"/>
<dbReference type="PDBsum" id="6ORD"/>
<dbReference type="PDBsum" id="6OSI"/>
<dbReference type="PDBsum" id="6OTR"/>
<dbReference type="PDBsum" id="6OXA"/>
<dbReference type="PDBsum" id="6OXI"/>
<dbReference type="PDBsum" id="6Q95"/>
<dbReference type="PDBsum" id="6QNQ"/>
<dbReference type="PDBsum" id="6QNR"/>
<dbReference type="PDBsum" id="6UCQ"/>
<dbReference type="PDBsum" id="6UO1"/>
<dbReference type="PDBsum" id="6XHV"/>
<dbReference type="PDBsum" id="6XHW"/>
<dbReference type="PDBsum" id="6XHX"/>
<dbReference type="PDBsum" id="6XHY"/>
<dbReference type="PDBsum" id="6XQD"/>
<dbReference type="PDBsum" id="6XQE"/>
<dbReference type="PDBsum" id="7AZO"/>
<dbReference type="PDBsum" id="7AZS"/>
<dbReference type="PDBsum" id="7JQL"/>
<dbReference type="PDBsum" id="7JQM"/>
<dbReference type="PDBsum" id="7LH5"/>
<dbReference type="PDBsum" id="7MD7"/>
<dbReference type="PDBsum" id="7RQ8"/>
<dbReference type="PDBsum" id="7RQ9"/>
<dbReference type="PDBsum" id="7RQA"/>
<dbReference type="PDBsum" id="7RQB"/>
<dbReference type="PDBsum" id="7RQC"/>
<dbReference type="PDBsum" id="7RQD"/>
<dbReference type="PDBsum" id="7RQE"/>
<dbReference type="PDBsum" id="7U2H"/>
<dbReference type="PDBsum" id="7U2I"/>
<dbReference type="PDBsum" id="7U2J"/>
<dbReference type="PDBsum" id="8CVJ"/>
<dbReference type="PDBsum" id="8CVK"/>
<dbReference type="PDBsum" id="8CVL"/>
<dbReference type="PDBsum" id="8EKB"/>
<dbReference type="PDBsum" id="8EV6"/>
<dbReference type="PDBsum" id="8EV7"/>
<dbReference type="PDBsum" id="8FC1"/>
<dbReference type="PDBsum" id="8FC2"/>
<dbReference type="PDBsum" id="8FC3"/>
<dbReference type="PDBsum" id="8FC4"/>
<dbReference type="PDBsum" id="8FC5"/>
<dbReference type="PDBsum" id="8FC6"/>
<dbReference type="PDBsum" id="8FOM"/>
<dbReference type="PDBsum" id="8FON"/>
<dbReference type="PDBsum" id="8G29"/>
<dbReference type="PDBsum" id="8G2A"/>
<dbReference type="PDBsum" id="8G2B"/>
<dbReference type="PDBsum" id="8G2C"/>
<dbReference type="PDBsum" id="8G2D"/>
<dbReference type="PDBsum" id="8T8B"/>
<dbReference type="PDBsum" id="8T8C"/>
<dbReference type="PDBsum" id="8UD6"/>
<dbReference type="PDBsum" id="8UD7"/>
<dbReference type="PDBsum" id="8UD8"/>
<dbReference type="PDBsum" id="8UVR"/>
<dbReference type="PDBsum" id="8UVS"/>
<dbReference type="PDBsum" id="8VTU"/>
<dbReference type="PDBsum" id="8VTV"/>
<dbReference type="PDBsum" id="8VTW"/>
<dbReference type="PDBsum" id="8VTX"/>
<dbReference type="PDBsum" id="8VTY"/>
<dbReference type="PDBsum" id="8WV1"/>
<dbReference type="PDBsum" id="9B00"/>
<dbReference type="PDBsum" id="9D0J"/>
<dbReference type="PDBsum" id="9D7R"/>
<dbReference type="PDBsum" id="9D7S"/>
<dbReference type="PDBsum" id="9D7T"/>
<dbReference type="PDBsum" id="9DFC"/>
<dbReference type="PDBsum" id="9DFD"/>
<dbReference type="PDBsum" id="9DFE"/>
<dbReference type="EMDB" id="EMD-0101"/>
<dbReference type="EMDB" id="EMD-0104"/>
<dbReference type="EMDB" id="EMD-0105"/>
<dbReference type="EMDB" id="EMD-3852"/>
<dbReference type="EMDB" id="EMD-4475"/>
<dbReference type="EMDB" id="EMD-6934"/>
<dbReference type="EMDB" id="EMD-8596"/>
<dbReference type="EMDB" id="EMD-8597"/>
<dbReference type="SMR" id="Q5SHN8"/>
<dbReference type="IntAct" id="Q5SHN8">
    <property type="interactions" value="8"/>
</dbReference>
<dbReference type="EnsemblBacteria" id="BAD71515">
    <property type="protein sequence ID" value="BAD71515"/>
    <property type="gene ID" value="BAD71515"/>
</dbReference>
<dbReference type="GeneID" id="3167929"/>
<dbReference type="KEGG" id="ttj:TTHA1692"/>
<dbReference type="PATRIC" id="fig|300852.9.peg.1662"/>
<dbReference type="eggNOG" id="COG0087">
    <property type="taxonomic scope" value="Bacteria"/>
</dbReference>
<dbReference type="HOGENOM" id="CLU_044142_4_1_0"/>
<dbReference type="PhylomeDB" id="Q5SHN8"/>
<dbReference type="Proteomes" id="UP000000532">
    <property type="component" value="Chromosome"/>
</dbReference>
<dbReference type="GO" id="GO:0022625">
    <property type="term" value="C:cytosolic large ribosomal subunit"/>
    <property type="evidence" value="ECO:0007669"/>
    <property type="project" value="TreeGrafter"/>
</dbReference>
<dbReference type="GO" id="GO:0019843">
    <property type="term" value="F:rRNA binding"/>
    <property type="evidence" value="ECO:0007669"/>
    <property type="project" value="UniProtKB-UniRule"/>
</dbReference>
<dbReference type="GO" id="GO:0003735">
    <property type="term" value="F:structural constituent of ribosome"/>
    <property type="evidence" value="ECO:0007669"/>
    <property type="project" value="InterPro"/>
</dbReference>
<dbReference type="GO" id="GO:0006412">
    <property type="term" value="P:translation"/>
    <property type="evidence" value="ECO:0007669"/>
    <property type="project" value="UniProtKB-UniRule"/>
</dbReference>
<dbReference type="FunFam" id="2.40.30.10:FF:000004">
    <property type="entry name" value="50S ribosomal protein L3"/>
    <property type="match status" value="1"/>
</dbReference>
<dbReference type="FunFam" id="3.30.160.810:FF:000001">
    <property type="entry name" value="50S ribosomal protein L3"/>
    <property type="match status" value="1"/>
</dbReference>
<dbReference type="Gene3D" id="3.30.160.810">
    <property type="match status" value="1"/>
</dbReference>
<dbReference type="Gene3D" id="2.40.30.10">
    <property type="entry name" value="Translation factors"/>
    <property type="match status" value="1"/>
</dbReference>
<dbReference type="HAMAP" id="MF_01325_B">
    <property type="entry name" value="Ribosomal_uL3_B"/>
    <property type="match status" value="1"/>
</dbReference>
<dbReference type="InterPro" id="IPR000597">
    <property type="entry name" value="Ribosomal_uL3"/>
</dbReference>
<dbReference type="InterPro" id="IPR019927">
    <property type="entry name" value="Ribosomal_uL3_bac/org-type"/>
</dbReference>
<dbReference type="InterPro" id="IPR019926">
    <property type="entry name" value="Ribosomal_uL3_CS"/>
</dbReference>
<dbReference type="InterPro" id="IPR009000">
    <property type="entry name" value="Transl_B-barrel_sf"/>
</dbReference>
<dbReference type="NCBIfam" id="TIGR03625">
    <property type="entry name" value="L3_bact"/>
    <property type="match status" value="1"/>
</dbReference>
<dbReference type="PANTHER" id="PTHR11229">
    <property type="entry name" value="50S RIBOSOMAL PROTEIN L3"/>
    <property type="match status" value="1"/>
</dbReference>
<dbReference type="PANTHER" id="PTHR11229:SF16">
    <property type="entry name" value="LARGE RIBOSOMAL SUBUNIT PROTEIN UL3C"/>
    <property type="match status" value="1"/>
</dbReference>
<dbReference type="Pfam" id="PF00297">
    <property type="entry name" value="Ribosomal_L3"/>
    <property type="match status" value="1"/>
</dbReference>
<dbReference type="SUPFAM" id="SSF50447">
    <property type="entry name" value="Translation proteins"/>
    <property type="match status" value="1"/>
</dbReference>
<dbReference type="PROSITE" id="PS00474">
    <property type="entry name" value="RIBOSOMAL_L3"/>
    <property type="match status" value="1"/>
</dbReference>
<accession>Q5SHN8</accession>
<comment type="function">
    <text evidence="1">One of the primary rRNA binding proteins, it binds directly near the 3'-end of the 23S rRNA, where it nucleates assembly of the 50S subunit.</text>
</comment>
<comment type="subunit">
    <text>Part of the 50S ribosomal subunit. Forms a cluster with proteins L14 and L19.</text>
</comment>
<comment type="PTM">
    <text>The mass differences between the observed and calculated masses are suggested to be due to methylation, which is known to occur in the E.coli and R.palustris orthologs.</text>
</comment>
<comment type="mass spectrometry" mass="22437.0" method="MALDI" evidence="2"/>
<comment type="similarity">
    <text evidence="3">Belongs to the universal ribosomal protein uL3 family.</text>
</comment>